<feature type="chain" id="PRO_1000046532" description="Protein SprT">
    <location>
        <begin position="1"/>
        <end position="165"/>
    </location>
</feature>
<feature type="domain" description="SprT-like" evidence="1">
    <location>
        <begin position="10"/>
        <end position="158"/>
    </location>
</feature>
<feature type="active site" evidence="1">
    <location>
        <position position="70"/>
    </location>
</feature>
<feature type="binding site" evidence="1">
    <location>
        <position position="69"/>
    </location>
    <ligand>
        <name>Zn(2+)</name>
        <dbReference type="ChEBI" id="CHEBI:29105"/>
    </ligand>
</feature>
<feature type="binding site" evidence="1">
    <location>
        <position position="73"/>
    </location>
    <ligand>
        <name>Zn(2+)</name>
        <dbReference type="ChEBI" id="CHEBI:29105"/>
    </ligand>
</feature>
<dbReference type="EMBL" id="CP000438">
    <property type="protein sequence ID" value="ABJ10357.1"/>
    <property type="molecule type" value="Genomic_DNA"/>
</dbReference>
<dbReference type="RefSeq" id="WP_003140522.1">
    <property type="nucleotide sequence ID" value="NZ_CP034244.1"/>
</dbReference>
<dbReference type="SMR" id="Q02J09"/>
<dbReference type="KEGG" id="pau:PA14_49060"/>
<dbReference type="PseudoCAP" id="PA14_49060"/>
<dbReference type="HOGENOM" id="CLU_113336_0_1_6"/>
<dbReference type="BioCyc" id="PAER208963:G1G74-4119-MONOMER"/>
<dbReference type="Proteomes" id="UP000000653">
    <property type="component" value="Chromosome"/>
</dbReference>
<dbReference type="GO" id="GO:0005737">
    <property type="term" value="C:cytoplasm"/>
    <property type="evidence" value="ECO:0007669"/>
    <property type="project" value="UniProtKB-SubCell"/>
</dbReference>
<dbReference type="GO" id="GO:0008270">
    <property type="term" value="F:zinc ion binding"/>
    <property type="evidence" value="ECO:0007669"/>
    <property type="project" value="UniProtKB-UniRule"/>
</dbReference>
<dbReference type="GO" id="GO:0006950">
    <property type="term" value="P:response to stress"/>
    <property type="evidence" value="ECO:0007669"/>
    <property type="project" value="UniProtKB-ARBA"/>
</dbReference>
<dbReference type="HAMAP" id="MF_00746">
    <property type="entry name" value="SprT"/>
    <property type="match status" value="1"/>
</dbReference>
<dbReference type="InterPro" id="IPR006640">
    <property type="entry name" value="SprT-like_domain"/>
</dbReference>
<dbReference type="InterPro" id="IPR035240">
    <property type="entry name" value="SprT_Zn_ribbon"/>
</dbReference>
<dbReference type="InterPro" id="IPR023483">
    <property type="entry name" value="Uncharacterised_SprT"/>
</dbReference>
<dbReference type="NCBIfam" id="NF003421">
    <property type="entry name" value="PRK04860.1"/>
    <property type="match status" value="1"/>
</dbReference>
<dbReference type="PANTHER" id="PTHR38773">
    <property type="entry name" value="PROTEIN SPRT"/>
    <property type="match status" value="1"/>
</dbReference>
<dbReference type="PANTHER" id="PTHR38773:SF1">
    <property type="entry name" value="PROTEIN SPRT"/>
    <property type="match status" value="1"/>
</dbReference>
<dbReference type="Pfam" id="PF10263">
    <property type="entry name" value="SprT-like"/>
    <property type="match status" value="1"/>
</dbReference>
<dbReference type="Pfam" id="PF17283">
    <property type="entry name" value="Zn_ribbon_SprT"/>
    <property type="match status" value="1"/>
</dbReference>
<dbReference type="SMART" id="SM00731">
    <property type="entry name" value="SprT"/>
    <property type="match status" value="1"/>
</dbReference>
<dbReference type="PROSITE" id="PS00142">
    <property type="entry name" value="ZINC_PROTEASE"/>
    <property type="match status" value="1"/>
</dbReference>
<name>SPRT_PSEAB</name>
<reference key="1">
    <citation type="journal article" date="2006" name="Genome Biol.">
        <title>Genomic analysis reveals that Pseudomonas aeruginosa virulence is combinatorial.</title>
        <authorList>
            <person name="Lee D.G."/>
            <person name="Urbach J.M."/>
            <person name="Wu G."/>
            <person name="Liberati N.T."/>
            <person name="Feinbaum R.L."/>
            <person name="Miyata S."/>
            <person name="Diggins L.T."/>
            <person name="He J."/>
            <person name="Saucier M."/>
            <person name="Deziel E."/>
            <person name="Friedman L."/>
            <person name="Li L."/>
            <person name="Grills G."/>
            <person name="Montgomery K."/>
            <person name="Kucherlapati R."/>
            <person name="Rahme L.G."/>
            <person name="Ausubel F.M."/>
        </authorList>
    </citation>
    <scope>NUCLEOTIDE SEQUENCE [LARGE SCALE GENOMIC DNA]</scope>
    <source>
        <strain>UCBPP-PA14</strain>
    </source>
</reference>
<sequence>MPEHLNARVEACYRQAEHFFQRSFPRPTVSFRLRGQKAGVAHLDENLLRFNPQLYRENREHFLEQTVAHEVAHLIAHQLFGPRIRPHGEEWQLIMRGIYGLPPDRCHTYAVKRRATTRYLYRCHCPEHNEFPFSPQRHTLVAKGRRYYCRRCKATLVFTGEVLRE</sequence>
<accession>Q02J09</accession>
<comment type="cofactor">
    <cofactor evidence="1">
        <name>Zn(2+)</name>
        <dbReference type="ChEBI" id="CHEBI:29105"/>
    </cofactor>
    <text evidence="1">Binds 1 zinc ion.</text>
</comment>
<comment type="subcellular location">
    <subcellularLocation>
        <location evidence="1">Cytoplasm</location>
    </subcellularLocation>
</comment>
<comment type="similarity">
    <text evidence="1">Belongs to the SprT family.</text>
</comment>
<protein>
    <recommendedName>
        <fullName evidence="1">Protein SprT</fullName>
    </recommendedName>
</protein>
<keyword id="KW-0963">Cytoplasm</keyword>
<keyword id="KW-0479">Metal-binding</keyword>
<keyword id="KW-0862">Zinc</keyword>
<organism>
    <name type="scientific">Pseudomonas aeruginosa (strain UCBPP-PA14)</name>
    <dbReference type="NCBI Taxonomy" id="208963"/>
    <lineage>
        <taxon>Bacteria</taxon>
        <taxon>Pseudomonadati</taxon>
        <taxon>Pseudomonadota</taxon>
        <taxon>Gammaproteobacteria</taxon>
        <taxon>Pseudomonadales</taxon>
        <taxon>Pseudomonadaceae</taxon>
        <taxon>Pseudomonas</taxon>
    </lineage>
</organism>
<evidence type="ECO:0000255" key="1">
    <source>
        <dbReference type="HAMAP-Rule" id="MF_00746"/>
    </source>
</evidence>
<gene>
    <name evidence="1" type="primary">sprT</name>
    <name type="ordered locus">PA14_49060</name>
</gene>
<proteinExistence type="inferred from homology"/>